<protein>
    <recommendedName>
        <fullName>Endoglucanase EG-1</fullName>
        <ecNumber>3.2.1.4</ecNumber>
    </recommendedName>
    <alternativeName>
        <fullName>Cellulase</fullName>
    </alternativeName>
    <alternativeName>
        <fullName>Endo-1,4-beta-glucanase</fullName>
    </alternativeName>
</protein>
<evidence type="ECO:0000250" key="1"/>
<evidence type="ECO:0000255" key="2"/>
<evidence type="ECO:0000255" key="3">
    <source>
        <dbReference type="PROSITE-ProRule" id="PRU00597"/>
    </source>
</evidence>
<evidence type="ECO:0000256" key="4">
    <source>
        <dbReference type="SAM" id="MobiDB-lite"/>
    </source>
</evidence>
<evidence type="ECO:0000305" key="5"/>
<organism>
    <name type="scientific">Trichoderma longibrachiatum</name>
    <dbReference type="NCBI Taxonomy" id="5548"/>
    <lineage>
        <taxon>Eukaryota</taxon>
        <taxon>Fungi</taxon>
        <taxon>Dikarya</taxon>
        <taxon>Ascomycota</taxon>
        <taxon>Pezizomycotina</taxon>
        <taxon>Sordariomycetes</taxon>
        <taxon>Hypocreomycetidae</taxon>
        <taxon>Hypocreales</taxon>
        <taxon>Hypocreaceae</taxon>
        <taxon>Trichoderma</taxon>
    </lineage>
</organism>
<feature type="signal peptide" evidence="1">
    <location>
        <begin position="1"/>
        <end position="22"/>
    </location>
</feature>
<feature type="chain" id="PRO_0000007914" description="Endoglucanase EG-1">
    <location>
        <begin position="23"/>
        <end position="463"/>
    </location>
</feature>
<feature type="domain" description="CBM1" evidence="3">
    <location>
        <begin position="427"/>
        <end position="463"/>
    </location>
</feature>
<feature type="region of interest" description="Catalytic">
    <location>
        <begin position="23"/>
        <end position="397"/>
    </location>
</feature>
<feature type="region of interest" description="Disordered" evidence="4">
    <location>
        <begin position="390"/>
        <end position="429"/>
    </location>
</feature>
<feature type="region of interest" description="Linker">
    <location>
        <begin position="402"/>
        <end position="427"/>
    </location>
</feature>
<feature type="compositionally biased region" description="Low complexity" evidence="4">
    <location>
        <begin position="408"/>
        <end position="429"/>
    </location>
</feature>
<feature type="active site" description="Nucleophile" evidence="1">
    <location>
        <position position="218"/>
    </location>
</feature>
<feature type="active site" description="Proton donor" evidence="1">
    <location>
        <position position="223"/>
    </location>
</feature>
<feature type="glycosylation site" description="N-linked (GlcNAc...) asparagine" evidence="2">
    <location>
        <position position="78"/>
    </location>
</feature>
<feature type="glycosylation site" description="N-linked (GlcNAc...) asparagine" evidence="2">
    <location>
        <position position="164"/>
    </location>
</feature>
<feature type="glycosylation site" description="N-linked (GlcNAc...) asparagine" evidence="2">
    <location>
        <position position="204"/>
    </location>
</feature>
<feature type="glycosylation site" description="N-linked (GlcNAc...) asparagine" evidence="2">
    <location>
        <position position="208"/>
    </location>
</feature>
<feature type="glycosylation site" description="N-linked (GlcNAc...) asparagine" evidence="2">
    <location>
        <position position="394"/>
    </location>
</feature>
<feature type="disulfide bond" evidence="1">
    <location>
        <begin position="435"/>
        <end position="452"/>
    </location>
</feature>
<feature type="disulfide bond" evidence="1">
    <location>
        <begin position="446"/>
        <end position="462"/>
    </location>
</feature>
<reference key="1">
    <citation type="journal article" date="1992" name="Appl. Microbiol. Biotechnol.">
        <title>Cloning, sequence analysis and yeast expression of the egl1 gene from Trichoderma longibrachiatum.</title>
        <authorList>
            <person name="Gonzalez R."/>
            <person name="Ramon D."/>
            <person name="Perez-Gonzalez J.A."/>
        </authorList>
    </citation>
    <scope>NUCLEOTIDE SEQUENCE [GENOMIC DNA]</scope>
    <source>
        <strain>CECT 2606</strain>
    </source>
</reference>
<accession>Q12714</accession>
<proteinExistence type="inferred from homology"/>
<comment type="function">
    <text>The biological conversion of cellulose to glucose generally requires three types of hydrolytic enzymes: (1) Endoglucanases which cut internal beta-1,4-glucosidic bonds; (2) Exocellobiohydrolases that cut the disaccharide cellobiose from the non-reducing end of the cellulose polymer chain; (3) Beta-1,4-glucosidases which hydrolyze the cellobiose and other short cello-oligosaccharides to glucose.</text>
</comment>
<comment type="catalytic activity">
    <reaction>
        <text>Endohydrolysis of (1-&gt;4)-beta-D-glucosidic linkages in cellulose, lichenin and cereal beta-D-glucans.</text>
        <dbReference type="EC" id="3.2.1.4"/>
    </reaction>
</comment>
<comment type="subcellular location">
    <subcellularLocation>
        <location>Secreted</location>
    </subcellularLocation>
</comment>
<comment type="similarity">
    <text evidence="5">Belongs to the glycosyl hydrolase 7 (cellulase C) family.</text>
</comment>
<keyword id="KW-0119">Carbohydrate metabolism</keyword>
<keyword id="KW-0136">Cellulose degradation</keyword>
<keyword id="KW-1015">Disulfide bond</keyword>
<keyword id="KW-0325">Glycoprotein</keyword>
<keyword id="KW-0326">Glycosidase</keyword>
<keyword id="KW-0378">Hydrolase</keyword>
<keyword id="KW-0624">Polysaccharide degradation</keyword>
<keyword id="KW-0964">Secreted</keyword>
<keyword id="KW-0732">Signal</keyword>
<sequence>MAPSATLPLTTAILAIGRLVAAQQPGTSTPEVHPKLTTYKCTTSGGCVAQDTSVVLDWNYRWMHDANYNSCTVNGGVNTTLCPDEATCGKNCYIEGVDYAASGVTASGSTLTLNQYMPSSSGGYSSVSPRLYLLGPDGEYVMLKLNGQELSFDVDLSALPCGENGSLYLSQMDENGGANQYNTAGANYGSGYCDAQCPVQTWRNGTLNTSGQGFCCNEMDILEGNSRANALTPHSCTATACDSAGCGFNPYGSGYPNYFGPGDTVDTSKTFTIITQFNTDNGSPSGNLVSITRKYRQNGVDIPSAKPGGDTISSCPSASAYGGLATMGKALSSGMVLVFSIWNDNSQYMNWLDSGRAGPCSSTEGNPSNILANNPGTHVVYSNIRWGDIGSTTNSTGGNPPPPPPPASSTTFSTTRRSSTTSSSPSCTQTHWGQCGGIGYTGCKTCTSGTTCQYGNDYYSQCL</sequence>
<name>GUN1_TRILO</name>
<dbReference type="EC" id="3.2.1.4"/>
<dbReference type="EMBL" id="X60652">
    <property type="protein sequence ID" value="CAA43059.1"/>
    <property type="molecule type" value="Genomic_DNA"/>
</dbReference>
<dbReference type="PIR" id="A48375">
    <property type="entry name" value="A48375"/>
</dbReference>
<dbReference type="SMR" id="Q12714"/>
<dbReference type="CAZy" id="CBM1">
    <property type="family name" value="Carbohydrate-Binding Module Family 1"/>
</dbReference>
<dbReference type="CAZy" id="GH7">
    <property type="family name" value="Glycoside Hydrolase Family 7"/>
</dbReference>
<dbReference type="GlyCosmos" id="Q12714">
    <property type="glycosylation" value="5 sites, No reported glycans"/>
</dbReference>
<dbReference type="BRENDA" id="3.2.1.4">
    <property type="organism ID" value="6448"/>
</dbReference>
<dbReference type="GO" id="GO:0005576">
    <property type="term" value="C:extracellular region"/>
    <property type="evidence" value="ECO:0007669"/>
    <property type="project" value="UniProtKB-SubCell"/>
</dbReference>
<dbReference type="GO" id="GO:0008810">
    <property type="term" value="F:cellulase activity"/>
    <property type="evidence" value="ECO:0007669"/>
    <property type="project" value="UniProtKB-EC"/>
</dbReference>
<dbReference type="GO" id="GO:0030248">
    <property type="term" value="F:cellulose binding"/>
    <property type="evidence" value="ECO:0007669"/>
    <property type="project" value="InterPro"/>
</dbReference>
<dbReference type="GO" id="GO:0030245">
    <property type="term" value="P:cellulose catabolic process"/>
    <property type="evidence" value="ECO:0007669"/>
    <property type="project" value="UniProtKB-KW"/>
</dbReference>
<dbReference type="CDD" id="cd07999">
    <property type="entry name" value="GH7_CBH_EG"/>
    <property type="match status" value="1"/>
</dbReference>
<dbReference type="Gene3D" id="2.70.100.10">
    <property type="entry name" value="Glycoside hydrolase, family 7, domain"/>
    <property type="match status" value="1"/>
</dbReference>
<dbReference type="InterPro" id="IPR035971">
    <property type="entry name" value="CBD_sf"/>
</dbReference>
<dbReference type="InterPro" id="IPR000254">
    <property type="entry name" value="Cellulose-bd_dom_fun"/>
</dbReference>
<dbReference type="InterPro" id="IPR013320">
    <property type="entry name" value="ConA-like_dom_sf"/>
</dbReference>
<dbReference type="InterPro" id="IPR001722">
    <property type="entry name" value="Glyco_hydro_7"/>
</dbReference>
<dbReference type="InterPro" id="IPR037019">
    <property type="entry name" value="Glyco_hydro_7_sf"/>
</dbReference>
<dbReference type="PANTHER" id="PTHR33753">
    <property type="entry name" value="1,4-BETA-D-GLUCAN CELLOBIOHYDROLASE B"/>
    <property type="match status" value="1"/>
</dbReference>
<dbReference type="PANTHER" id="PTHR33753:SF1">
    <property type="entry name" value="ENDO-BETA-1,4-GLUCANASE CELB"/>
    <property type="match status" value="1"/>
</dbReference>
<dbReference type="Pfam" id="PF00734">
    <property type="entry name" value="CBM_1"/>
    <property type="match status" value="1"/>
</dbReference>
<dbReference type="Pfam" id="PF00840">
    <property type="entry name" value="Glyco_hydro_7"/>
    <property type="match status" value="1"/>
</dbReference>
<dbReference type="PRINTS" id="PR00734">
    <property type="entry name" value="GLHYDRLASE7"/>
</dbReference>
<dbReference type="SMART" id="SM00236">
    <property type="entry name" value="fCBD"/>
    <property type="match status" value="1"/>
</dbReference>
<dbReference type="SUPFAM" id="SSF57180">
    <property type="entry name" value="Cellulose-binding domain"/>
    <property type="match status" value="1"/>
</dbReference>
<dbReference type="SUPFAM" id="SSF49899">
    <property type="entry name" value="Concanavalin A-like lectins/glucanases"/>
    <property type="match status" value="1"/>
</dbReference>
<dbReference type="PROSITE" id="PS00562">
    <property type="entry name" value="CBM1_1"/>
    <property type="match status" value="1"/>
</dbReference>
<dbReference type="PROSITE" id="PS51164">
    <property type="entry name" value="CBM1_2"/>
    <property type="match status" value="1"/>
</dbReference>
<gene>
    <name type="primary">egl1</name>
</gene>